<accession>A0JZ20</accession>
<gene>
    <name evidence="1" type="primary">acpS</name>
    <name type="ordered locus">Arth_2911</name>
</gene>
<evidence type="ECO:0000255" key="1">
    <source>
        <dbReference type="HAMAP-Rule" id="MF_00101"/>
    </source>
</evidence>
<feature type="chain" id="PRO_1000008383" description="Holo-[acyl-carrier-protein] synthase">
    <location>
        <begin position="1"/>
        <end position="115"/>
    </location>
</feature>
<feature type="binding site" evidence="1">
    <location>
        <position position="8"/>
    </location>
    <ligand>
        <name>Mg(2+)</name>
        <dbReference type="ChEBI" id="CHEBI:18420"/>
    </ligand>
</feature>
<feature type="binding site" evidence="1">
    <location>
        <position position="50"/>
    </location>
    <ligand>
        <name>Mg(2+)</name>
        <dbReference type="ChEBI" id="CHEBI:18420"/>
    </ligand>
</feature>
<keyword id="KW-0963">Cytoplasm</keyword>
<keyword id="KW-0275">Fatty acid biosynthesis</keyword>
<keyword id="KW-0276">Fatty acid metabolism</keyword>
<keyword id="KW-0444">Lipid biosynthesis</keyword>
<keyword id="KW-0443">Lipid metabolism</keyword>
<keyword id="KW-0460">Magnesium</keyword>
<keyword id="KW-0479">Metal-binding</keyword>
<keyword id="KW-1185">Reference proteome</keyword>
<keyword id="KW-0808">Transferase</keyword>
<dbReference type="EC" id="2.7.8.7" evidence="1"/>
<dbReference type="EMBL" id="CP000454">
    <property type="protein sequence ID" value="ABK04290.1"/>
    <property type="molecule type" value="Genomic_DNA"/>
</dbReference>
<dbReference type="RefSeq" id="WP_011692749.1">
    <property type="nucleotide sequence ID" value="NC_008541.1"/>
</dbReference>
<dbReference type="SMR" id="A0JZ20"/>
<dbReference type="STRING" id="290399.Arth_2911"/>
<dbReference type="KEGG" id="art:Arth_2911"/>
<dbReference type="eggNOG" id="COG0736">
    <property type="taxonomic scope" value="Bacteria"/>
</dbReference>
<dbReference type="HOGENOM" id="CLU_089696_0_0_11"/>
<dbReference type="OrthoDB" id="517356at2"/>
<dbReference type="Proteomes" id="UP000000754">
    <property type="component" value="Chromosome"/>
</dbReference>
<dbReference type="GO" id="GO:0005737">
    <property type="term" value="C:cytoplasm"/>
    <property type="evidence" value="ECO:0007669"/>
    <property type="project" value="UniProtKB-SubCell"/>
</dbReference>
<dbReference type="GO" id="GO:0008897">
    <property type="term" value="F:holo-[acyl-carrier-protein] synthase activity"/>
    <property type="evidence" value="ECO:0007669"/>
    <property type="project" value="UniProtKB-UniRule"/>
</dbReference>
<dbReference type="GO" id="GO:0000287">
    <property type="term" value="F:magnesium ion binding"/>
    <property type="evidence" value="ECO:0007669"/>
    <property type="project" value="UniProtKB-UniRule"/>
</dbReference>
<dbReference type="GO" id="GO:0006633">
    <property type="term" value="P:fatty acid biosynthetic process"/>
    <property type="evidence" value="ECO:0007669"/>
    <property type="project" value="UniProtKB-UniRule"/>
</dbReference>
<dbReference type="Gene3D" id="3.90.470.20">
    <property type="entry name" value="4'-phosphopantetheinyl transferase domain"/>
    <property type="match status" value="1"/>
</dbReference>
<dbReference type="HAMAP" id="MF_00101">
    <property type="entry name" value="AcpS"/>
    <property type="match status" value="1"/>
</dbReference>
<dbReference type="InterPro" id="IPR008278">
    <property type="entry name" value="4-PPantetheinyl_Trfase_dom"/>
</dbReference>
<dbReference type="InterPro" id="IPR037143">
    <property type="entry name" value="4-PPantetheinyl_Trfase_dom_sf"/>
</dbReference>
<dbReference type="InterPro" id="IPR002582">
    <property type="entry name" value="ACPS"/>
</dbReference>
<dbReference type="InterPro" id="IPR004568">
    <property type="entry name" value="Ppantetheine-prot_Trfase_dom"/>
</dbReference>
<dbReference type="NCBIfam" id="TIGR00556">
    <property type="entry name" value="pantethn_trn"/>
    <property type="match status" value="1"/>
</dbReference>
<dbReference type="NCBIfam" id="NF000832">
    <property type="entry name" value="PRK00070.3-2"/>
    <property type="match status" value="1"/>
</dbReference>
<dbReference type="Pfam" id="PF01648">
    <property type="entry name" value="ACPS"/>
    <property type="match status" value="1"/>
</dbReference>
<dbReference type="SUPFAM" id="SSF56214">
    <property type="entry name" value="4'-phosphopantetheinyl transferase"/>
    <property type="match status" value="1"/>
</dbReference>
<comment type="function">
    <text evidence="1">Transfers the 4'-phosphopantetheine moiety from coenzyme A to a Ser of acyl-carrier-protein.</text>
</comment>
<comment type="catalytic activity">
    <reaction evidence="1">
        <text>apo-[ACP] + CoA = holo-[ACP] + adenosine 3',5'-bisphosphate + H(+)</text>
        <dbReference type="Rhea" id="RHEA:12068"/>
        <dbReference type="Rhea" id="RHEA-COMP:9685"/>
        <dbReference type="Rhea" id="RHEA-COMP:9690"/>
        <dbReference type="ChEBI" id="CHEBI:15378"/>
        <dbReference type="ChEBI" id="CHEBI:29999"/>
        <dbReference type="ChEBI" id="CHEBI:57287"/>
        <dbReference type="ChEBI" id="CHEBI:58343"/>
        <dbReference type="ChEBI" id="CHEBI:64479"/>
        <dbReference type="EC" id="2.7.8.7"/>
    </reaction>
</comment>
<comment type="cofactor">
    <cofactor evidence="1">
        <name>Mg(2+)</name>
        <dbReference type="ChEBI" id="CHEBI:18420"/>
    </cofactor>
</comment>
<comment type="subcellular location">
    <subcellularLocation>
        <location evidence="1">Cytoplasm</location>
    </subcellularLocation>
</comment>
<comment type="similarity">
    <text evidence="1">Belongs to the P-Pant transferase superfamily. AcpS family.</text>
</comment>
<sequence length="115" mass="12365">MIVGIGVDVVDIERFGRQLERTPGLRDRLFVPAERELNTRSLAARFAAKEAVAKVLGAPAGMNWQDCWIGLDQNGPTIQVKGTVLAVAESKGVKRWHLSMSHDGGIATATVLAEG</sequence>
<proteinExistence type="inferred from homology"/>
<reference key="1">
    <citation type="journal article" date="2013" name="Stand. Genomic Sci.">
        <title>Complete genome sequence of Arthrobacter sp. strain FB24.</title>
        <authorList>
            <person name="Nakatsu C.H."/>
            <person name="Barabote R."/>
            <person name="Thompson S."/>
            <person name="Bruce D."/>
            <person name="Detter C."/>
            <person name="Brettin T."/>
            <person name="Han C."/>
            <person name="Beasley F."/>
            <person name="Chen W."/>
            <person name="Konopka A."/>
            <person name="Xie G."/>
        </authorList>
    </citation>
    <scope>NUCLEOTIDE SEQUENCE [LARGE SCALE GENOMIC DNA]</scope>
    <source>
        <strain>FB24</strain>
    </source>
</reference>
<name>ACPS_ARTS2</name>
<protein>
    <recommendedName>
        <fullName evidence="1">Holo-[acyl-carrier-protein] synthase</fullName>
        <shortName evidence="1">Holo-ACP synthase</shortName>
        <ecNumber evidence="1">2.7.8.7</ecNumber>
    </recommendedName>
    <alternativeName>
        <fullName evidence="1">4'-phosphopantetheinyl transferase AcpS</fullName>
    </alternativeName>
</protein>
<organism>
    <name type="scientific">Arthrobacter sp. (strain FB24)</name>
    <dbReference type="NCBI Taxonomy" id="290399"/>
    <lineage>
        <taxon>Bacteria</taxon>
        <taxon>Bacillati</taxon>
        <taxon>Actinomycetota</taxon>
        <taxon>Actinomycetes</taxon>
        <taxon>Micrococcales</taxon>
        <taxon>Micrococcaceae</taxon>
        <taxon>Arthrobacter</taxon>
    </lineage>
</organism>